<sequence length="682" mass="78344">MTAVSLSDGTAVLKTDPWLEPFSGALRERYAAYQKQRTIIEEHEGGLAEFSKGYKSMGFQIDKNGGVRYREWASNATEARLIGEFNNWSHTANPMTKSPFGVWECYVPPVSPGVCAIPHDSMVKISMTLPGGESIDRIPTWITRVTQDLNISPIYDGRFWNPPKEQQYQFKHGHSTRPVEGLKIYEAHVGISSPNMRVTTYKEFEVDVLPKIKQLGYNCIQMMAIMEHAYYASFGYQVTNFFAASSRFGTPEELKSLVDKAHELGLTVLLDVVHSHASKNILDGINMYDGSDHLYFHEGGRGRHDQWDSRLFNYGQHEVLRFLLSNLRFWMDIYMFDGFRFDGVTSMMYKHHGIGSGFSGGYHEYFGDSVDLEAMVYLMLANAMLHETYPHVVTIAEDVSGMPTLCRPVAEGGVGFDYRLSMAIPDMWIKLLKEYTDDQWEMGQIVHNLTNRRHLEKSVAYAESHDQALVGDKTLAFWLMDKEMYDFMSDLSPLTPIIDRGLALHKMIRFIVHTLGGEAYLNFEGNEFGHPEWMDFPREGNGNSFAHARRQFNLVDDKLLRYKYLYEFDVAMNWLEDKYKWLNSPQAYVSLKHEGDKMIVFERAGLLFIFNFHPTQSFTDYRVGVDTAGEYKVILTSDETRFGGHNRIDMGGRYFTTPMEWNGRKNWLQVYSPSRTVLVLGL</sequence>
<keyword id="KW-0963">Cytoplasm</keyword>
<keyword id="KW-0320">Glycogen biosynthesis</keyword>
<keyword id="KW-0328">Glycosyltransferase</keyword>
<keyword id="KW-1185">Reference proteome</keyword>
<keyword id="KW-0808">Transferase</keyword>
<accession>P0CN82</accession>
<accession>Q55ZX8</accession>
<accession>Q5KP87</accession>
<proteinExistence type="inferred from homology"/>
<evidence type="ECO:0000250" key="1">
    <source>
        <dbReference type="UniProtKB" id="P32775"/>
    </source>
</evidence>
<evidence type="ECO:0000250" key="2">
    <source>
        <dbReference type="UniProtKB" id="Q04446"/>
    </source>
</evidence>
<evidence type="ECO:0000250" key="3">
    <source>
        <dbReference type="UniProtKB" id="Q6FJV0"/>
    </source>
</evidence>
<evidence type="ECO:0000305" key="4"/>
<organism>
    <name type="scientific">Cryptococcus neoformans var. neoformans serotype D (strain JEC21 / ATCC MYA-565)</name>
    <name type="common">Filobasidiella neoformans</name>
    <dbReference type="NCBI Taxonomy" id="214684"/>
    <lineage>
        <taxon>Eukaryota</taxon>
        <taxon>Fungi</taxon>
        <taxon>Dikarya</taxon>
        <taxon>Basidiomycota</taxon>
        <taxon>Agaricomycotina</taxon>
        <taxon>Tremellomycetes</taxon>
        <taxon>Tremellales</taxon>
        <taxon>Cryptococcaceae</taxon>
        <taxon>Cryptococcus</taxon>
        <taxon>Cryptococcus neoformans species complex</taxon>
    </lineage>
</organism>
<comment type="function">
    <text evidence="2">Glycogen-branching enzyme participates in the glycogen biosynthetic process along with glycogenin and glycogen synthase. Generates alpha-1,6-glucosidic branches from alpha-1,4-linked glucose chains, to increase solubility of the glycogen polymer.</text>
</comment>
<comment type="catalytic activity">
    <reaction evidence="2">
        <text>Transfers a segment of a (1-&gt;4)-alpha-D-glucan chain to a primary hydroxy group in a similar glucan chain.</text>
        <dbReference type="EC" id="2.4.1.18"/>
    </reaction>
</comment>
<comment type="pathway">
    <text evidence="2">Glycan biosynthesis; glycogen biosynthesis.</text>
</comment>
<comment type="subcellular location">
    <subcellularLocation>
        <location evidence="1">Cytoplasm</location>
    </subcellularLocation>
    <text evidence="1">Localizes to glycogen granules in the cytoplasm.</text>
</comment>
<comment type="similarity">
    <text evidence="4">Belongs to the glycosyl hydrolase 13 family. GlgB subfamily.</text>
</comment>
<protein>
    <recommendedName>
        <fullName>1,4-alpha-glucan-branching enzyme</fullName>
        <ecNumber evidence="2">2.4.1.18</ecNumber>
    </recommendedName>
    <alternativeName>
        <fullName>Glycogen-branching enzyme</fullName>
    </alternativeName>
</protein>
<name>GLGB_CRYNJ</name>
<gene>
    <name type="primary">GLC3</name>
    <name type="ordered locus">CNA03810</name>
</gene>
<reference key="1">
    <citation type="journal article" date="2005" name="Science">
        <title>The genome of the basidiomycetous yeast and human pathogen Cryptococcus neoformans.</title>
        <authorList>
            <person name="Loftus B.J."/>
            <person name="Fung E."/>
            <person name="Roncaglia P."/>
            <person name="Rowley D."/>
            <person name="Amedeo P."/>
            <person name="Bruno D."/>
            <person name="Vamathevan J."/>
            <person name="Miranda M."/>
            <person name="Anderson I.J."/>
            <person name="Fraser J.A."/>
            <person name="Allen J.E."/>
            <person name="Bosdet I.E."/>
            <person name="Brent M.R."/>
            <person name="Chiu R."/>
            <person name="Doering T.L."/>
            <person name="Donlin M.J."/>
            <person name="D'Souza C.A."/>
            <person name="Fox D.S."/>
            <person name="Grinberg V."/>
            <person name="Fu J."/>
            <person name="Fukushima M."/>
            <person name="Haas B.J."/>
            <person name="Huang J.C."/>
            <person name="Janbon G."/>
            <person name="Jones S.J.M."/>
            <person name="Koo H.L."/>
            <person name="Krzywinski M.I."/>
            <person name="Kwon-Chung K.J."/>
            <person name="Lengeler K.B."/>
            <person name="Maiti R."/>
            <person name="Marra M.A."/>
            <person name="Marra R.E."/>
            <person name="Mathewson C.A."/>
            <person name="Mitchell T.G."/>
            <person name="Pertea M."/>
            <person name="Riggs F.R."/>
            <person name="Salzberg S.L."/>
            <person name="Schein J.E."/>
            <person name="Shvartsbeyn A."/>
            <person name="Shin H."/>
            <person name="Shumway M."/>
            <person name="Specht C.A."/>
            <person name="Suh B.B."/>
            <person name="Tenney A."/>
            <person name="Utterback T.R."/>
            <person name="Wickes B.L."/>
            <person name="Wortman J.R."/>
            <person name="Wye N.H."/>
            <person name="Kronstad J.W."/>
            <person name="Lodge J.K."/>
            <person name="Heitman J."/>
            <person name="Davis R.W."/>
            <person name="Fraser C.M."/>
            <person name="Hyman R.W."/>
        </authorList>
    </citation>
    <scope>NUCLEOTIDE SEQUENCE [LARGE SCALE GENOMIC DNA]</scope>
    <source>
        <strain>JEC21 / ATCC MYA-565</strain>
    </source>
</reference>
<dbReference type="EC" id="2.4.1.18" evidence="2"/>
<dbReference type="EMBL" id="AE017341">
    <property type="protein sequence ID" value="AAW40900.1"/>
    <property type="molecule type" value="Genomic_DNA"/>
</dbReference>
<dbReference type="RefSeq" id="XP_566719.1">
    <property type="nucleotide sequence ID" value="XM_566719.1"/>
</dbReference>
<dbReference type="SMR" id="P0CN82"/>
<dbReference type="STRING" id="214684.P0CN82"/>
<dbReference type="CAZy" id="CBM48">
    <property type="family name" value="Carbohydrate-Binding Module Family 48"/>
</dbReference>
<dbReference type="CAZy" id="GH13">
    <property type="family name" value="Glycoside Hydrolase Family 13"/>
</dbReference>
<dbReference type="PaxDb" id="214684-P0CN82"/>
<dbReference type="EnsemblFungi" id="AAW40900">
    <property type="protein sequence ID" value="AAW40900"/>
    <property type="gene ID" value="CNA03810"/>
</dbReference>
<dbReference type="GeneID" id="3253422"/>
<dbReference type="KEGG" id="cne:CNA03810"/>
<dbReference type="VEuPathDB" id="FungiDB:CNA03810"/>
<dbReference type="eggNOG" id="KOG0470">
    <property type="taxonomic scope" value="Eukaryota"/>
</dbReference>
<dbReference type="HOGENOM" id="CLU_011131_2_2_1"/>
<dbReference type="InParanoid" id="P0CN82"/>
<dbReference type="OMA" id="YEMHLGS"/>
<dbReference type="OrthoDB" id="196493at2759"/>
<dbReference type="UniPathway" id="UPA00164"/>
<dbReference type="Proteomes" id="UP000002149">
    <property type="component" value="Chromosome 1"/>
</dbReference>
<dbReference type="GO" id="GO:0005737">
    <property type="term" value="C:cytoplasm"/>
    <property type="evidence" value="ECO:0000250"/>
    <property type="project" value="UniProtKB"/>
</dbReference>
<dbReference type="GO" id="GO:0003844">
    <property type="term" value="F:1,4-alpha-glucan branching enzyme activity"/>
    <property type="evidence" value="ECO:0000318"/>
    <property type="project" value="GO_Central"/>
</dbReference>
<dbReference type="GO" id="GO:0043169">
    <property type="term" value="F:cation binding"/>
    <property type="evidence" value="ECO:0007669"/>
    <property type="project" value="InterPro"/>
</dbReference>
<dbReference type="GO" id="GO:0004553">
    <property type="term" value="F:hydrolase activity, hydrolyzing O-glycosyl compounds"/>
    <property type="evidence" value="ECO:0007669"/>
    <property type="project" value="InterPro"/>
</dbReference>
<dbReference type="GO" id="GO:0005978">
    <property type="term" value="P:glycogen biosynthetic process"/>
    <property type="evidence" value="ECO:0000318"/>
    <property type="project" value="GO_Central"/>
</dbReference>
<dbReference type="CDD" id="cd11321">
    <property type="entry name" value="AmyAc_bac_euk_BE"/>
    <property type="match status" value="1"/>
</dbReference>
<dbReference type="CDD" id="cd02854">
    <property type="entry name" value="E_set_GBE_euk_N"/>
    <property type="match status" value="1"/>
</dbReference>
<dbReference type="FunFam" id="3.20.20.80:FF:000001">
    <property type="entry name" value="1,4-alpha-glucan branching enzyme"/>
    <property type="match status" value="1"/>
</dbReference>
<dbReference type="FunFam" id="2.60.40.10:FF:000250">
    <property type="entry name" value="1,4-alpha-glucan-branching enzyme, chloroplastic/amyloplastic"/>
    <property type="match status" value="1"/>
</dbReference>
<dbReference type="FunFam" id="2.60.40.1180:FF:000003">
    <property type="entry name" value="1,4-alpha-glucan-branching enzyme, chloroplastic/amyloplastic"/>
    <property type="match status" value="1"/>
</dbReference>
<dbReference type="Gene3D" id="3.20.20.80">
    <property type="entry name" value="Glycosidases"/>
    <property type="match status" value="1"/>
</dbReference>
<dbReference type="Gene3D" id="2.60.40.1180">
    <property type="entry name" value="Golgi alpha-mannosidase II"/>
    <property type="match status" value="1"/>
</dbReference>
<dbReference type="Gene3D" id="2.60.40.10">
    <property type="entry name" value="Immunoglobulins"/>
    <property type="match status" value="1"/>
</dbReference>
<dbReference type="InterPro" id="IPR006048">
    <property type="entry name" value="A-amylase/branching_C"/>
</dbReference>
<dbReference type="InterPro" id="IPR037439">
    <property type="entry name" value="Branching_enzy"/>
</dbReference>
<dbReference type="InterPro" id="IPR006047">
    <property type="entry name" value="Glyco_hydro_13_cat_dom"/>
</dbReference>
<dbReference type="InterPro" id="IPR004193">
    <property type="entry name" value="Glyco_hydro_13_N"/>
</dbReference>
<dbReference type="InterPro" id="IPR013780">
    <property type="entry name" value="Glyco_hydro_b"/>
</dbReference>
<dbReference type="InterPro" id="IPR017853">
    <property type="entry name" value="Glycoside_hydrolase_SF"/>
</dbReference>
<dbReference type="InterPro" id="IPR013783">
    <property type="entry name" value="Ig-like_fold"/>
</dbReference>
<dbReference type="InterPro" id="IPR014756">
    <property type="entry name" value="Ig_E-set"/>
</dbReference>
<dbReference type="PANTHER" id="PTHR43651">
    <property type="entry name" value="1,4-ALPHA-GLUCAN-BRANCHING ENZYME"/>
    <property type="match status" value="1"/>
</dbReference>
<dbReference type="PANTHER" id="PTHR43651:SF3">
    <property type="entry name" value="1,4-ALPHA-GLUCAN-BRANCHING ENZYME"/>
    <property type="match status" value="1"/>
</dbReference>
<dbReference type="Pfam" id="PF00128">
    <property type="entry name" value="Alpha-amylase"/>
    <property type="match status" value="1"/>
</dbReference>
<dbReference type="Pfam" id="PF02806">
    <property type="entry name" value="Alpha-amylase_C"/>
    <property type="match status" value="1"/>
</dbReference>
<dbReference type="Pfam" id="PF02922">
    <property type="entry name" value="CBM_48"/>
    <property type="match status" value="1"/>
</dbReference>
<dbReference type="PIRSF" id="PIRSF000463">
    <property type="entry name" value="GlgB"/>
    <property type="match status" value="1"/>
</dbReference>
<dbReference type="SMART" id="SM00642">
    <property type="entry name" value="Aamy"/>
    <property type="match status" value="1"/>
</dbReference>
<dbReference type="SUPFAM" id="SSF51445">
    <property type="entry name" value="(Trans)glycosidases"/>
    <property type="match status" value="1"/>
</dbReference>
<dbReference type="SUPFAM" id="SSF81296">
    <property type="entry name" value="E set domains"/>
    <property type="match status" value="1"/>
</dbReference>
<dbReference type="SUPFAM" id="SSF51011">
    <property type="entry name" value="Glycosyl hydrolase domain"/>
    <property type="match status" value="1"/>
</dbReference>
<feature type="chain" id="PRO_0000188780" description="1,4-alpha-glucan-branching enzyme">
    <location>
        <begin position="1"/>
        <end position="682"/>
    </location>
</feature>
<feature type="active site" description="Nucleophile" evidence="2">
    <location>
        <position position="342"/>
    </location>
</feature>
<feature type="active site" description="Proton donor" evidence="2">
    <location>
        <position position="397"/>
    </location>
</feature>
<feature type="binding site" evidence="3">
    <location>
        <position position="88"/>
    </location>
    <ligand>
        <name>(1,4-alpha-D-glucosyl)n</name>
        <dbReference type="ChEBI" id="CHEBI:15444"/>
    </ligand>
</feature>
<feature type="binding site" evidence="3">
    <location>
        <position position="124"/>
    </location>
    <ligand>
        <name>(1,4-alpha-D-glucosyl)n</name>
        <dbReference type="ChEBI" id="CHEBI:15444"/>
    </ligand>
</feature>
<feature type="site" description="Transition state stabilizer" evidence="2">
    <location>
        <position position="466"/>
    </location>
</feature>